<protein>
    <recommendedName>
        <fullName>Movement protein</fullName>
        <shortName>MP</shortName>
    </recommendedName>
</protein>
<reference key="1">
    <citation type="journal article" date="2001" name="Virology">
        <title>Sequence diversity and virulence in Zea mays of Maize streak virus isolates.</title>
        <authorList>
            <person name="Martin D.P."/>
            <person name="Willment J.A."/>
            <person name="Billharz R."/>
            <person name="Velders R."/>
            <person name="Odhiambo B."/>
            <person name="Njuguna J."/>
            <person name="James D."/>
            <person name="Rybicki E.P."/>
        </authorList>
    </citation>
    <scope>NUCLEOTIDE SEQUENCE [GENOMIC DNA]</scope>
</reference>
<evidence type="ECO:0000250" key="1"/>
<evidence type="ECO:0000255" key="2"/>
<evidence type="ECO:0000256" key="3">
    <source>
        <dbReference type="SAM" id="MobiDB-lite"/>
    </source>
</evidence>
<evidence type="ECO:0000305" key="4"/>
<name>MP_MSVPA</name>
<accession>Q91MG4</accession>
<keyword id="KW-1043">Host membrane</keyword>
<keyword id="KW-0472">Membrane</keyword>
<keyword id="KW-0812">Transmembrane</keyword>
<keyword id="KW-1133">Transmembrane helix</keyword>
<keyword id="KW-0813">Transport</keyword>
<keyword id="KW-0916">Viral movement protein</keyword>
<feature type="chain" id="PRO_0000316930" description="Movement protein">
    <location>
        <begin position="1"/>
        <end position="101"/>
    </location>
</feature>
<feature type="transmembrane region" description="Helical" evidence="2">
    <location>
        <begin position="30"/>
        <end position="50"/>
    </location>
</feature>
<feature type="region of interest" description="Disordered" evidence="3">
    <location>
        <begin position="78"/>
        <end position="101"/>
    </location>
</feature>
<feature type="compositionally biased region" description="Pro residues" evidence="3">
    <location>
        <begin position="90"/>
        <end position="101"/>
    </location>
</feature>
<dbReference type="EMBL" id="AF329888">
    <property type="protein sequence ID" value="AAK73467.1"/>
    <property type="molecule type" value="Genomic_DNA"/>
</dbReference>
<dbReference type="SMR" id="Q91MG4"/>
<dbReference type="Proteomes" id="UP000007780">
    <property type="component" value="Genome"/>
</dbReference>
<dbReference type="GO" id="GO:0033644">
    <property type="term" value="C:host cell membrane"/>
    <property type="evidence" value="ECO:0007669"/>
    <property type="project" value="UniProtKB-SubCell"/>
</dbReference>
<dbReference type="GO" id="GO:0016020">
    <property type="term" value="C:membrane"/>
    <property type="evidence" value="ECO:0007669"/>
    <property type="project" value="UniProtKB-KW"/>
</dbReference>
<dbReference type="GO" id="GO:0046740">
    <property type="term" value="P:transport of virus in host, cell to cell"/>
    <property type="evidence" value="ECO:0007669"/>
    <property type="project" value="UniProtKB-KW"/>
</dbReference>
<dbReference type="InterPro" id="IPR002621">
    <property type="entry name" value="Gemini_mov"/>
</dbReference>
<dbReference type="Pfam" id="PF01708">
    <property type="entry name" value="Gemini_mov"/>
    <property type="match status" value="1"/>
</dbReference>
<gene>
    <name type="ORF">V2</name>
</gene>
<comment type="function">
    <text>Involved in the viral transport within, and between cells.</text>
</comment>
<comment type="subunit">
    <text evidence="1">Interacts with the capsid protein (CP). Part of a MP-CP-viral DNA complex (By similarity).</text>
</comment>
<comment type="subcellular location">
    <subcellularLocation>
        <location evidence="4">Host membrane</location>
        <topology evidence="4">Single-pass membrane protein</topology>
    </subcellularLocation>
</comment>
<comment type="similarity">
    <text evidence="4">Belongs to the mastrevirus movement protein family.</text>
</comment>
<organism>
    <name type="scientific">Maize streak virus genotype E (isolate Pat)</name>
    <name type="common">MSV</name>
    <dbReference type="NCBI Taxonomy" id="268331"/>
    <lineage>
        <taxon>Viruses</taxon>
        <taxon>Monodnaviria</taxon>
        <taxon>Shotokuvirae</taxon>
        <taxon>Cressdnaviricota</taxon>
        <taxon>Repensiviricetes</taxon>
        <taxon>Geplafuvirales</taxon>
        <taxon>Geminiviridae</taxon>
        <taxon>Mastrevirus</taxon>
        <taxon>Maize streak virus</taxon>
    </lineage>
</organism>
<proteinExistence type="inferred from homology"/>
<organismHost>
    <name type="scientific">Avena sativa</name>
    <name type="common">Oat</name>
    <dbReference type="NCBI Taxonomy" id="4498"/>
</organismHost>
<organismHost>
    <name type="scientific">Axonopus compressus</name>
    <dbReference type="NCBI Taxonomy" id="217170"/>
</organismHost>
<organismHost>
    <name type="scientific">Cenchrus americanus</name>
    <name type="common">Pearl millet</name>
    <name type="synonym">Pennisetum glaucum</name>
    <dbReference type="NCBI Taxonomy" id="4543"/>
</organismHost>
<organismHost>
    <name type="scientific">Cenchrus polystachios</name>
    <dbReference type="NCBI Taxonomy" id="281129"/>
</organismHost>
<organismHost>
    <name type="scientific">Coix lacryma-jobi</name>
    <name type="common">Job's tears</name>
    <dbReference type="NCBI Taxonomy" id="4505"/>
</organismHost>
<organismHost>
    <name type="scientific">Dactyloctenium aegyptium</name>
    <dbReference type="NCBI Taxonomy" id="270102"/>
</organismHost>
<organismHost>
    <name type="scientific">Digitaria</name>
    <dbReference type="NCBI Taxonomy" id="66017"/>
</organismHost>
<organismHost>
    <name type="scientific">Echinochloa colona</name>
    <dbReference type="NCBI Taxonomy" id="90396"/>
</organismHost>
<organismHost>
    <name type="scientific">Eleusine coracana</name>
    <name type="common">Indian finger millet</name>
    <name type="synonym">Ragi</name>
    <dbReference type="NCBI Taxonomy" id="4511"/>
</organismHost>
<organismHost>
    <name type="scientific">Eleusine indica</name>
    <name type="common">Goosegrass</name>
    <name type="synonym">Cynosurus indicus</name>
    <dbReference type="NCBI Taxonomy" id="29674"/>
</organismHost>
<organismHost>
    <name type="scientific">Hordeum vulgare</name>
    <name type="common">Barley</name>
    <dbReference type="NCBI Taxonomy" id="4513"/>
</organismHost>
<organismHost>
    <name type="scientific">Megathyrsus maximus</name>
    <dbReference type="NCBI Taxonomy" id="59788"/>
</organismHost>
<organismHost>
    <name type="scientific">Melinis repens</name>
    <name type="common">Red Natal grass</name>
    <name type="synonym">Rhynchelytrum repens</name>
    <dbReference type="NCBI Taxonomy" id="29709"/>
</organismHost>
<organismHost>
    <name type="scientific">Oryza glaberrima</name>
    <name type="common">African rice</name>
    <dbReference type="NCBI Taxonomy" id="4538"/>
</organismHost>
<organismHost>
    <name type="scientific">Oryza sativa</name>
    <name type="common">Rice</name>
    <dbReference type="NCBI Taxonomy" id="4530"/>
</organismHost>
<organismHost>
    <name type="scientific">Paspalum conjugatum</name>
    <name type="common">Hilo grass</name>
    <dbReference type="NCBI Taxonomy" id="158143"/>
</organismHost>
<organismHost>
    <name type="scientific">Paspalum notatum</name>
    <name type="common">Bahia grass</name>
    <dbReference type="NCBI Taxonomy" id="147272"/>
</organismHost>
<organismHost>
    <name type="scientific">Paspalum scrobiculatum</name>
    <dbReference type="NCBI Taxonomy" id="173849"/>
</organismHost>
<organismHost>
    <name type="scientific">Rottboellia cochinchinensis</name>
    <dbReference type="NCBI Taxonomy" id="300125"/>
</organismHost>
<organismHost>
    <name type="scientific">Saccharum officinarum</name>
    <name type="common">Sugarcane</name>
    <dbReference type="NCBI Taxonomy" id="4547"/>
</organismHost>
<organismHost>
    <name type="scientific">Setaria barbata</name>
    <dbReference type="NCBI Taxonomy" id="192628"/>
</organismHost>
<organismHost>
    <name type="scientific">Triticum aestivum</name>
    <name type="common">Wheat</name>
    <dbReference type="NCBI Taxonomy" id="4565"/>
</organismHost>
<organismHost>
    <name type="scientific">Urochloa deflexa</name>
    <dbReference type="NCBI Taxonomy" id="240436"/>
</organismHost>
<organismHost>
    <name type="scientific">Zea mays</name>
    <name type="common">Maize</name>
    <dbReference type="NCBI Taxonomy" id="4577"/>
</organismHost>
<sequence>MDPQSAVYSLPRVPTAAPPNAGVPWSHVGEVAVLSFVALICIYLLYLWVLRDLILVLKARRGRSTEELIFGSEAVDRRSPIPNTLEPTAPVHPGPFVPGSG</sequence>